<comment type="function">
    <text evidence="1">Cytokine that promotes the proliferation, survival and differentiation of monocytes and macrophages. Promotes the release of pro-inflammatory chemokines, and thereby plays an important role in innate immunity and in inflammatory processes. Plays an important role in the regulation of osteoclast proliferation and differentiation, and in the regulation of bone resorption. Signaling via CSF1R and its downstream effectors stimulates phosphorylation of MAPK1/ERK2 AND MAPK3/ERK1 (By similarity).</text>
</comment>
<comment type="subunit">
    <text evidence="1">Homodimer. Interacts with CSF1R (By similarity).</text>
</comment>
<comment type="subcellular location">
    <subcellularLocation>
        <location evidence="1">Secreted</location>
    </subcellularLocation>
</comment>
<comment type="similarity">
    <text evidence="4">Belongs to the IL-34 family.</text>
</comment>
<name>IL34_RAT</name>
<feature type="signal peptide" evidence="2">
    <location>
        <begin position="1"/>
        <end position="20"/>
    </location>
</feature>
<feature type="chain" id="PRO_0000294350" description="Interleukin-34">
    <location>
        <begin position="21"/>
        <end position="234"/>
    </location>
</feature>
<feature type="region of interest" description="Disordered" evidence="3">
    <location>
        <begin position="215"/>
        <end position="234"/>
    </location>
</feature>
<feature type="compositionally biased region" description="Polar residues" evidence="3">
    <location>
        <begin position="222"/>
        <end position="234"/>
    </location>
</feature>
<feature type="glycosylation site" description="N-linked (GlcNAc...) asparagine" evidence="2">
    <location>
        <position position="99"/>
    </location>
</feature>
<accession>Q4KM46</accession>
<protein>
    <recommendedName>
        <fullName>Interleukin-34</fullName>
        <shortName>IL-34</shortName>
    </recommendedName>
</protein>
<proteinExistence type="evidence at transcript level"/>
<keyword id="KW-0202">Cytokine</keyword>
<keyword id="KW-0325">Glycoprotein</keyword>
<keyword id="KW-0339">Growth factor</keyword>
<keyword id="KW-0391">Immunity</keyword>
<keyword id="KW-0395">Inflammatory response</keyword>
<keyword id="KW-0399">Innate immunity</keyword>
<keyword id="KW-1185">Reference proteome</keyword>
<keyword id="KW-0964">Secreted</keyword>
<keyword id="KW-0732">Signal</keyword>
<organism>
    <name type="scientific">Rattus norvegicus</name>
    <name type="common">Rat</name>
    <dbReference type="NCBI Taxonomy" id="10116"/>
    <lineage>
        <taxon>Eukaryota</taxon>
        <taxon>Metazoa</taxon>
        <taxon>Chordata</taxon>
        <taxon>Craniata</taxon>
        <taxon>Vertebrata</taxon>
        <taxon>Euteleostomi</taxon>
        <taxon>Mammalia</taxon>
        <taxon>Eutheria</taxon>
        <taxon>Euarchontoglires</taxon>
        <taxon>Glires</taxon>
        <taxon>Rodentia</taxon>
        <taxon>Myomorpha</taxon>
        <taxon>Muroidea</taxon>
        <taxon>Muridae</taxon>
        <taxon>Murinae</taxon>
        <taxon>Rattus</taxon>
    </lineage>
</organism>
<dbReference type="EMBL" id="BC098808">
    <property type="protein sequence ID" value="AAH98808.1"/>
    <property type="molecule type" value="mRNA"/>
</dbReference>
<dbReference type="RefSeq" id="NP_001020937.1">
    <property type="nucleotide sequence ID" value="NM_001025766.2"/>
</dbReference>
<dbReference type="RefSeq" id="XP_006255662.1">
    <property type="nucleotide sequence ID" value="XM_006255600.3"/>
</dbReference>
<dbReference type="SMR" id="Q4KM46"/>
<dbReference type="FunCoup" id="Q4KM46">
    <property type="interactions" value="279"/>
</dbReference>
<dbReference type="STRING" id="10116.ENSRNOP00000023823"/>
<dbReference type="GlyCosmos" id="Q4KM46">
    <property type="glycosylation" value="1 site, No reported glycans"/>
</dbReference>
<dbReference type="GlyGen" id="Q4KM46">
    <property type="glycosylation" value="1 site"/>
</dbReference>
<dbReference type="PaxDb" id="10116-ENSRNOP00000023823"/>
<dbReference type="GeneID" id="498951"/>
<dbReference type="KEGG" id="rno:498951"/>
<dbReference type="UCSC" id="RGD:1586038">
    <property type="organism name" value="rat"/>
</dbReference>
<dbReference type="AGR" id="RGD:1586038"/>
<dbReference type="CTD" id="146433"/>
<dbReference type="RGD" id="1586038">
    <property type="gene designation" value="Il34"/>
</dbReference>
<dbReference type="eggNOG" id="ENOG502S2ET">
    <property type="taxonomic scope" value="Eukaryota"/>
</dbReference>
<dbReference type="HOGENOM" id="CLU_102223_1_0_1"/>
<dbReference type="InParanoid" id="Q4KM46"/>
<dbReference type="OrthoDB" id="9902423at2759"/>
<dbReference type="PhylomeDB" id="Q4KM46"/>
<dbReference type="Reactome" id="R-RNO-449836">
    <property type="pathway name" value="Other interleukin signaling"/>
</dbReference>
<dbReference type="PRO" id="PR:Q4KM46"/>
<dbReference type="Proteomes" id="UP000002494">
    <property type="component" value="Unplaced"/>
</dbReference>
<dbReference type="GO" id="GO:0005615">
    <property type="term" value="C:extracellular space"/>
    <property type="evidence" value="ECO:0000250"/>
    <property type="project" value="UniProtKB"/>
</dbReference>
<dbReference type="GO" id="GO:0005125">
    <property type="term" value="F:cytokine activity"/>
    <property type="evidence" value="ECO:0007669"/>
    <property type="project" value="UniProtKB-KW"/>
</dbReference>
<dbReference type="GO" id="GO:0008083">
    <property type="term" value="F:growth factor activity"/>
    <property type="evidence" value="ECO:0007669"/>
    <property type="project" value="UniProtKB-KW"/>
</dbReference>
<dbReference type="GO" id="GO:0005157">
    <property type="term" value="F:macrophage colony-stimulating factor receptor binding"/>
    <property type="evidence" value="ECO:0000250"/>
    <property type="project" value="UniProtKB"/>
</dbReference>
<dbReference type="GO" id="GO:0006954">
    <property type="term" value="P:inflammatory response"/>
    <property type="evidence" value="ECO:0007669"/>
    <property type="project" value="UniProtKB-KW"/>
</dbReference>
<dbReference type="GO" id="GO:0045087">
    <property type="term" value="P:innate immune response"/>
    <property type="evidence" value="ECO:0007669"/>
    <property type="project" value="UniProtKB-KW"/>
</dbReference>
<dbReference type="GO" id="GO:0061514">
    <property type="term" value="P:interleukin-34-mediated signaling pathway"/>
    <property type="evidence" value="ECO:0000266"/>
    <property type="project" value="RGD"/>
</dbReference>
<dbReference type="GO" id="GO:0061518">
    <property type="term" value="P:microglial cell proliferation"/>
    <property type="evidence" value="ECO:0000266"/>
    <property type="project" value="RGD"/>
</dbReference>
<dbReference type="GO" id="GO:0008284">
    <property type="term" value="P:positive regulation of cell population proliferation"/>
    <property type="evidence" value="ECO:0000250"/>
    <property type="project" value="UniProtKB"/>
</dbReference>
<dbReference type="GO" id="GO:0010628">
    <property type="term" value="P:positive regulation of gene expression"/>
    <property type="evidence" value="ECO:0000266"/>
    <property type="project" value="RGD"/>
</dbReference>
<dbReference type="GO" id="GO:0010759">
    <property type="term" value="P:positive regulation of macrophage chemotaxis"/>
    <property type="evidence" value="ECO:0000266"/>
    <property type="project" value="RGD"/>
</dbReference>
<dbReference type="GO" id="GO:0045651">
    <property type="term" value="P:positive regulation of macrophage differentiation"/>
    <property type="evidence" value="ECO:0000266"/>
    <property type="project" value="RGD"/>
</dbReference>
<dbReference type="GO" id="GO:0120041">
    <property type="term" value="P:positive regulation of macrophage proliferation"/>
    <property type="evidence" value="ECO:0000266"/>
    <property type="project" value="RGD"/>
</dbReference>
<dbReference type="GO" id="GO:0045657">
    <property type="term" value="P:positive regulation of monocyte differentiation"/>
    <property type="evidence" value="ECO:0000266"/>
    <property type="project" value="RGD"/>
</dbReference>
<dbReference type="GO" id="GO:0048714">
    <property type="term" value="P:positive regulation of oligodendrocyte differentiation"/>
    <property type="evidence" value="ECO:0000250"/>
    <property type="project" value="UniProtKB"/>
</dbReference>
<dbReference type="GO" id="GO:0001934">
    <property type="term" value="P:positive regulation of protein phosphorylation"/>
    <property type="evidence" value="ECO:0000250"/>
    <property type="project" value="UniProtKB"/>
</dbReference>
<dbReference type="FunFam" id="1.20.1250.80:FF:000001">
    <property type="entry name" value="Interleukin-34"/>
    <property type="match status" value="1"/>
</dbReference>
<dbReference type="Gene3D" id="1.20.1250.80">
    <property type="entry name" value="Interleukin-34"/>
    <property type="match status" value="1"/>
</dbReference>
<dbReference type="InterPro" id="IPR020415">
    <property type="entry name" value="IL-34"/>
</dbReference>
<dbReference type="InterPro" id="IPR038328">
    <property type="entry name" value="IL-34_sf"/>
</dbReference>
<dbReference type="PANTHER" id="PTHR28606">
    <property type="entry name" value="INTERLEUKIN-34"/>
    <property type="match status" value="1"/>
</dbReference>
<dbReference type="PANTHER" id="PTHR28606:SF1">
    <property type="entry name" value="INTERLEUKIN-34"/>
    <property type="match status" value="1"/>
</dbReference>
<dbReference type="Pfam" id="PF15036">
    <property type="entry name" value="IL34"/>
    <property type="match status" value="1"/>
</dbReference>
<dbReference type="PRINTS" id="PR01938">
    <property type="entry name" value="INTRLEUKIN34"/>
</dbReference>
<gene>
    <name type="primary">Il34</name>
</gene>
<reference key="1">
    <citation type="journal article" date="2004" name="Genome Res.">
        <title>The status, quality, and expansion of the NIH full-length cDNA project: the Mammalian Gene Collection (MGC).</title>
        <authorList>
            <consortium name="The MGC Project Team"/>
        </authorList>
    </citation>
    <scope>NUCLEOTIDE SEQUENCE [LARGE SCALE MRNA]</scope>
    <source>
        <tissue>Spleen</tissue>
    </source>
</reference>
<sequence>MPWGLAWLYCLGILLDVALGNENLEIWTLAQDKECDLTGYLRGKLQYKNRLQYMKHYFPINYRIAVPYEGVLRVANITRLKAHVSERELRYLWVLVSLNATESVLDVLLEGHPSWKYLQEVQTLLENVQRSLMDVEIGPHVEAVLSLLSTPGLSLKLVRPKALLDNCFRVMELLYCSCCKQSPILKWQDCELPRLHPHSPESLMQCAATNVYPLPRQPPTSLPRSPSSNHGPLP</sequence>
<evidence type="ECO:0000250" key="1"/>
<evidence type="ECO:0000255" key="2"/>
<evidence type="ECO:0000256" key="3">
    <source>
        <dbReference type="SAM" id="MobiDB-lite"/>
    </source>
</evidence>
<evidence type="ECO:0000305" key="4"/>